<protein>
    <recommendedName>
        <fullName evidence="1">Photosystem I iron-sulfur center</fullName>
        <ecNumber evidence="1">1.97.1.12</ecNumber>
    </recommendedName>
    <alternativeName>
        <fullName evidence="1">9 kDa polypeptide</fullName>
    </alternativeName>
    <alternativeName>
        <fullName evidence="1">PSI-C</fullName>
    </alternativeName>
    <alternativeName>
        <fullName evidence="1">Photosystem I subunit VII</fullName>
    </alternativeName>
    <alternativeName>
        <fullName evidence="1">PsaC</fullName>
    </alternativeName>
</protein>
<gene>
    <name evidence="1" type="primary">psaC</name>
    <name type="synonym">frxA</name>
</gene>
<dbReference type="EC" id="1.97.1.12" evidence="1"/>
<dbReference type="EMBL" id="X16859">
    <property type="protein sequence ID" value="CAA34750.1"/>
    <property type="molecule type" value="mRNA"/>
</dbReference>
<dbReference type="EMBL" id="AJ400848">
    <property type="protein sequence ID" value="CAB88785.1"/>
    <property type="molecule type" value="Genomic_DNA"/>
</dbReference>
<dbReference type="PIR" id="S12198">
    <property type="entry name" value="S12198"/>
</dbReference>
<dbReference type="RefSeq" id="NP_054989.1">
    <property type="nucleotide sequence ID" value="NC_002202.1"/>
</dbReference>
<dbReference type="PDB" id="9GRX">
    <property type="method" value="EM"/>
    <property type="resolution" value="3.19 A"/>
    <property type="chains" value="c=1-81"/>
</dbReference>
<dbReference type="PDBsum" id="9GRX"/>
<dbReference type="EMDB" id="EMD-51527"/>
<dbReference type="SMR" id="P10098"/>
<dbReference type="FunCoup" id="P10098">
    <property type="interactions" value="224"/>
</dbReference>
<dbReference type="STRING" id="3562.P10098"/>
<dbReference type="ChEMBL" id="CHEMBL2366465"/>
<dbReference type="GeneID" id="2715604"/>
<dbReference type="KEGG" id="soe:2715604"/>
<dbReference type="InParanoid" id="P10098"/>
<dbReference type="OrthoDB" id="9at2759"/>
<dbReference type="BRENDA" id="1.97.1.12">
    <property type="organism ID" value="5812"/>
</dbReference>
<dbReference type="PRO" id="PR:P10098"/>
<dbReference type="Proteomes" id="UP001155700">
    <property type="component" value="Chloroplast Pltd"/>
</dbReference>
<dbReference type="GO" id="GO:0009535">
    <property type="term" value="C:chloroplast thylakoid membrane"/>
    <property type="evidence" value="ECO:0007669"/>
    <property type="project" value="UniProtKB-SubCell"/>
</dbReference>
<dbReference type="GO" id="GO:0009522">
    <property type="term" value="C:photosystem I"/>
    <property type="evidence" value="ECO:0007669"/>
    <property type="project" value="UniProtKB-KW"/>
</dbReference>
<dbReference type="GO" id="GO:0051539">
    <property type="term" value="F:4 iron, 4 sulfur cluster binding"/>
    <property type="evidence" value="ECO:0007669"/>
    <property type="project" value="UniProtKB-KW"/>
</dbReference>
<dbReference type="GO" id="GO:0009055">
    <property type="term" value="F:electron transfer activity"/>
    <property type="evidence" value="ECO:0007669"/>
    <property type="project" value="UniProtKB-UniRule"/>
</dbReference>
<dbReference type="GO" id="GO:0046872">
    <property type="term" value="F:metal ion binding"/>
    <property type="evidence" value="ECO:0007669"/>
    <property type="project" value="UniProtKB-KW"/>
</dbReference>
<dbReference type="GO" id="GO:0016491">
    <property type="term" value="F:oxidoreductase activity"/>
    <property type="evidence" value="ECO:0007669"/>
    <property type="project" value="UniProtKB-KW"/>
</dbReference>
<dbReference type="GO" id="GO:0015979">
    <property type="term" value="P:photosynthesis"/>
    <property type="evidence" value="ECO:0000318"/>
    <property type="project" value="GO_Central"/>
</dbReference>
<dbReference type="GO" id="GO:0009773">
    <property type="term" value="P:photosynthetic electron transport in photosystem I"/>
    <property type="evidence" value="ECO:0007669"/>
    <property type="project" value="InterPro"/>
</dbReference>
<dbReference type="FunFam" id="3.30.70.20:FF:000001">
    <property type="entry name" value="Photosystem I iron-sulfur center"/>
    <property type="match status" value="1"/>
</dbReference>
<dbReference type="Gene3D" id="3.30.70.20">
    <property type="match status" value="1"/>
</dbReference>
<dbReference type="HAMAP" id="MF_01303">
    <property type="entry name" value="PSI_PsaC"/>
    <property type="match status" value="1"/>
</dbReference>
<dbReference type="InterPro" id="IPR017896">
    <property type="entry name" value="4Fe4S_Fe-S-bd"/>
</dbReference>
<dbReference type="InterPro" id="IPR017900">
    <property type="entry name" value="4Fe4S_Fe_S_CS"/>
</dbReference>
<dbReference type="InterPro" id="IPR050157">
    <property type="entry name" value="PSI_iron-sulfur_center"/>
</dbReference>
<dbReference type="InterPro" id="IPR017491">
    <property type="entry name" value="PSI_PsaC"/>
</dbReference>
<dbReference type="NCBIfam" id="TIGR03048">
    <property type="entry name" value="PS_I_psaC"/>
    <property type="match status" value="1"/>
</dbReference>
<dbReference type="PANTHER" id="PTHR24960:SF79">
    <property type="entry name" value="PHOTOSYSTEM I IRON-SULFUR CENTER"/>
    <property type="match status" value="1"/>
</dbReference>
<dbReference type="PANTHER" id="PTHR24960">
    <property type="entry name" value="PHOTOSYSTEM I IRON-SULFUR CENTER-RELATED"/>
    <property type="match status" value="1"/>
</dbReference>
<dbReference type="Pfam" id="PF14697">
    <property type="entry name" value="Fer4_21"/>
    <property type="match status" value="1"/>
</dbReference>
<dbReference type="SUPFAM" id="SSF54862">
    <property type="entry name" value="4Fe-4S ferredoxins"/>
    <property type="match status" value="1"/>
</dbReference>
<dbReference type="PROSITE" id="PS00198">
    <property type="entry name" value="4FE4S_FER_1"/>
    <property type="match status" value="2"/>
</dbReference>
<dbReference type="PROSITE" id="PS51379">
    <property type="entry name" value="4FE4S_FER_2"/>
    <property type="match status" value="2"/>
</dbReference>
<comment type="function">
    <text>Apoprotein for the two 4Fe-4S centers FA and FB of photosystem I (PSI); essential for photochemical activity. FB is the terminal electron acceptor of PSI, donating electrons to ferredoxin. The C-terminus interacts with PsaA/B/D and helps assemble the protein into the PSI complex. Required for binding of PsaD and PsaE to PSI. PSI is a plastocyanin-ferredoxin oxidoreductase, converting photonic excitation into a charge separation, which transfers an electron from the donor P700 chlorophyll pair to the spectroscopically characterized acceptors A0, A1, FX, FA and FB in turn.</text>
</comment>
<comment type="catalytic activity">
    <reaction evidence="1">
        <text>reduced [plastocyanin] + hnu + oxidized [2Fe-2S]-[ferredoxin] = oxidized [plastocyanin] + reduced [2Fe-2S]-[ferredoxin]</text>
        <dbReference type="Rhea" id="RHEA:30407"/>
        <dbReference type="Rhea" id="RHEA-COMP:10000"/>
        <dbReference type="Rhea" id="RHEA-COMP:10001"/>
        <dbReference type="Rhea" id="RHEA-COMP:10039"/>
        <dbReference type="Rhea" id="RHEA-COMP:10040"/>
        <dbReference type="ChEBI" id="CHEBI:29036"/>
        <dbReference type="ChEBI" id="CHEBI:30212"/>
        <dbReference type="ChEBI" id="CHEBI:33737"/>
        <dbReference type="ChEBI" id="CHEBI:33738"/>
        <dbReference type="ChEBI" id="CHEBI:49552"/>
        <dbReference type="EC" id="1.97.1.12"/>
    </reaction>
</comment>
<comment type="cofactor">
    <cofactor evidence="1">
        <name>[4Fe-4S] cluster</name>
        <dbReference type="ChEBI" id="CHEBI:49883"/>
    </cofactor>
    <text evidence="1">Binds 2 [4Fe-4S] clusters. Cluster 2 is most probably the spectroscopically characterized electron acceptor FA and cluster 1 is most probably FB.</text>
</comment>
<comment type="subunit">
    <text evidence="1">The eukaryotic PSI reaction center is composed of at least 11 subunits.</text>
</comment>
<comment type="subcellular location">
    <subcellularLocation>
        <location evidence="1">Plastid</location>
        <location evidence="1">Chloroplast thylakoid membrane</location>
        <topology evidence="1">Peripheral membrane protein</topology>
        <orientation evidence="1">Stromal side</orientation>
    </subcellularLocation>
</comment>
<name>PSAC_SPIOL</name>
<feature type="initiator methionine" description="Removed" evidence="2 3 4">
    <location>
        <position position="1"/>
    </location>
</feature>
<feature type="chain" id="PRO_0000062005" description="Photosystem I iron-sulfur center">
    <location>
        <begin position="2"/>
        <end position="81"/>
    </location>
</feature>
<feature type="domain" description="4Fe-4S ferredoxin-type 1" evidence="1">
    <location>
        <begin position="2"/>
        <end position="31"/>
    </location>
</feature>
<feature type="domain" description="4Fe-4S ferredoxin-type 2" evidence="1">
    <location>
        <begin position="39"/>
        <end position="68"/>
    </location>
</feature>
<feature type="binding site" evidence="1">
    <location>
        <position position="11"/>
    </location>
    <ligand>
        <name>[4Fe-4S] cluster</name>
        <dbReference type="ChEBI" id="CHEBI:49883"/>
        <label>1</label>
    </ligand>
</feature>
<feature type="binding site" evidence="1">
    <location>
        <position position="14"/>
    </location>
    <ligand>
        <name>[4Fe-4S] cluster</name>
        <dbReference type="ChEBI" id="CHEBI:49883"/>
        <label>1</label>
    </ligand>
</feature>
<feature type="binding site" evidence="1">
    <location>
        <position position="17"/>
    </location>
    <ligand>
        <name>[4Fe-4S] cluster</name>
        <dbReference type="ChEBI" id="CHEBI:49883"/>
        <label>1</label>
    </ligand>
</feature>
<feature type="binding site" evidence="1">
    <location>
        <position position="21"/>
    </location>
    <ligand>
        <name>[4Fe-4S] cluster</name>
        <dbReference type="ChEBI" id="CHEBI:49883"/>
        <label>2</label>
    </ligand>
</feature>
<feature type="binding site" evidence="1">
    <location>
        <position position="48"/>
    </location>
    <ligand>
        <name>[4Fe-4S] cluster</name>
        <dbReference type="ChEBI" id="CHEBI:49883"/>
        <label>2</label>
    </ligand>
</feature>
<feature type="binding site" evidence="1">
    <location>
        <position position="51"/>
    </location>
    <ligand>
        <name>[4Fe-4S] cluster</name>
        <dbReference type="ChEBI" id="CHEBI:49883"/>
        <label>2</label>
    </ligand>
</feature>
<feature type="binding site" evidence="1">
    <location>
        <position position="54"/>
    </location>
    <ligand>
        <name>[4Fe-4S] cluster</name>
        <dbReference type="ChEBI" id="CHEBI:49883"/>
        <label>2</label>
    </ligand>
</feature>
<feature type="binding site" evidence="1">
    <location>
        <position position="58"/>
    </location>
    <ligand>
        <name>[4Fe-4S] cluster</name>
        <dbReference type="ChEBI" id="CHEBI:49883"/>
        <label>1</label>
    </ligand>
</feature>
<organism>
    <name type="scientific">Spinacia oleracea</name>
    <name type="common">Spinach</name>
    <dbReference type="NCBI Taxonomy" id="3562"/>
    <lineage>
        <taxon>Eukaryota</taxon>
        <taxon>Viridiplantae</taxon>
        <taxon>Streptophyta</taxon>
        <taxon>Embryophyta</taxon>
        <taxon>Tracheophyta</taxon>
        <taxon>Spermatophyta</taxon>
        <taxon>Magnoliopsida</taxon>
        <taxon>eudicotyledons</taxon>
        <taxon>Gunneridae</taxon>
        <taxon>Pentapetalae</taxon>
        <taxon>Caryophyllales</taxon>
        <taxon>Chenopodiaceae</taxon>
        <taxon>Chenopodioideae</taxon>
        <taxon>Anserineae</taxon>
        <taxon>Spinacia</taxon>
    </lineage>
</organism>
<reference key="1">
    <citation type="journal article" date="1989" name="Curr. Genet.">
        <title>Nucleotide sequences of cDNA clones encoding the entire precursor polypeptide for subunit VI and of the plastome-encoded gene for subunit VII of the photosystem I reaction center from spinach.</title>
        <authorList>
            <person name="Steppuhn J."/>
            <person name="Hermans J."/>
            <person name="Nechushtai R."/>
            <person name="Herrmann G.S."/>
            <person name="Herrmann R.G."/>
        </authorList>
    </citation>
    <scope>NUCLEOTIDE SEQUENCE [MRNA]</scope>
</reference>
<reference key="2">
    <citation type="journal article" date="2001" name="Plant Mol. Biol.">
        <title>The plastid chromosome of spinach (Spinacia oleracea): complete nucleotide sequence and gene organization.</title>
        <authorList>
            <person name="Schmitz-Linneweber C."/>
            <person name="Maier R.M."/>
            <person name="Alcaraz J.-P."/>
            <person name="Cottet A."/>
            <person name="Herrmann R.G."/>
            <person name="Mache R."/>
        </authorList>
    </citation>
    <scope>NUCLEOTIDE SEQUENCE [LARGE SCALE GENOMIC DNA]</scope>
    <source>
        <strain>cv. Geant d'hiver</strain>
        <strain>cv. Monatol</strain>
    </source>
</reference>
<reference key="3">
    <citation type="journal article" date="1988" name="J. Biochem.">
        <title>The protein responsible for center A/B in spinach photosystem I: isolation with iron-sulfur cluster(s) and complete sequence analysis.</title>
        <authorList>
            <person name="Oh-oka H."/>
            <person name="Takahashi Y."/>
            <person name="Kuriyama K."/>
            <person name="Saeki K."/>
            <person name="Matsubara H."/>
        </authorList>
    </citation>
    <scope>PROTEIN SEQUENCE OF 2-81</scope>
</reference>
<reference key="4">
    <citation type="journal article" date="1988" name="FASEB J.">
        <title>A protein carrying Fe-S center A/B in spinach chloroplast photosystem I.</title>
        <authorList>
            <person name="Matsubara H."/>
            <person name="Oh-Oka H."/>
            <person name="Takahashi Y."/>
            <person name="Saeki K."/>
        </authorList>
    </citation>
    <scope>PROTEIN SEQUENCE OF 2-81</scope>
</reference>
<reference key="5">
    <citation type="journal article" date="1987" name="FEBS Lett.">
        <title>The 8kDa polypeptide in photosystem I is a probable candidate of an iron-sulfur center protein coded by the chloroplast gene frxA.</title>
        <authorList>
            <person name="Oh-Oka H."/>
            <person name="Takahashi Y."/>
            <person name="Wada K."/>
            <person name="Matsubara H."/>
            <person name="Ohyama K."/>
            <person name="Ozeki H."/>
        </authorList>
    </citation>
    <scope>PROTEIN SEQUENCE OF 2-30</scope>
</reference>
<reference key="6">
    <citation type="journal article" date="1998" name="J. Biol. Chem.">
        <title>Three-dimensional structure of higher plant photosystem I determined by electron crystallography.</title>
        <authorList>
            <person name="Kitmitto A."/>
            <person name="Mustafa A.O."/>
            <person name="Holzenburg A."/>
            <person name="Ford R.C."/>
        </authorList>
    </citation>
    <scope>3D-STRUCTURE MODELING</scope>
</reference>
<geneLocation type="chloroplast"/>
<accession>P10098</accession>
<sequence length="81" mass="9024">MSHSVKIYDTCIGCTQCVRACPTDVLEMIPWDGCKAKQIASAPRTEDCVGCKRCESACPTDFLSVRVYLWHETTRSMGLGY</sequence>
<keyword id="KW-0002">3D-structure</keyword>
<keyword id="KW-0004">4Fe-4S</keyword>
<keyword id="KW-0150">Chloroplast</keyword>
<keyword id="KW-0903">Direct protein sequencing</keyword>
<keyword id="KW-0249">Electron transport</keyword>
<keyword id="KW-0408">Iron</keyword>
<keyword id="KW-0411">Iron-sulfur</keyword>
<keyword id="KW-0472">Membrane</keyword>
<keyword id="KW-0479">Metal-binding</keyword>
<keyword id="KW-0560">Oxidoreductase</keyword>
<keyword id="KW-0602">Photosynthesis</keyword>
<keyword id="KW-0603">Photosystem I</keyword>
<keyword id="KW-0934">Plastid</keyword>
<keyword id="KW-1185">Reference proteome</keyword>
<keyword id="KW-0677">Repeat</keyword>
<keyword id="KW-0793">Thylakoid</keyword>
<keyword id="KW-0813">Transport</keyword>
<proteinExistence type="evidence at protein level"/>
<evidence type="ECO:0000255" key="1">
    <source>
        <dbReference type="HAMAP-Rule" id="MF_01303"/>
    </source>
</evidence>
<evidence type="ECO:0000269" key="2">
    <source>
    </source>
</evidence>
<evidence type="ECO:0000269" key="3">
    <source ref="4"/>
</evidence>
<evidence type="ECO:0000269" key="4">
    <source ref="5"/>
</evidence>